<proteinExistence type="inferred from homology"/>
<evidence type="ECO:0000255" key="1">
    <source>
        <dbReference type="HAMAP-Rule" id="MF_00373"/>
    </source>
</evidence>
<evidence type="ECO:0000305" key="2"/>
<comment type="similarity">
    <text evidence="1">Belongs to the bacterial ribosomal protein bL28 family.</text>
</comment>
<reference key="1">
    <citation type="journal article" date="2010" name="Appl. Environ. Microbiol.">
        <title>Conserved symbiotic plasmid DNA sequences in the multireplicon pangenomic structure of Rhizobium etli.</title>
        <authorList>
            <person name="Gonzalez V."/>
            <person name="Acosta J.L."/>
            <person name="Santamaria R.I."/>
            <person name="Bustos P."/>
            <person name="Fernandez J.L."/>
            <person name="Hernandez Gonzalez I.L."/>
            <person name="Diaz R."/>
            <person name="Flores M."/>
            <person name="Palacios R."/>
            <person name="Mora J."/>
            <person name="Davila G."/>
        </authorList>
    </citation>
    <scope>NUCLEOTIDE SEQUENCE [LARGE SCALE GENOMIC DNA]</scope>
    <source>
        <strain>CIAT 652</strain>
    </source>
</reference>
<name>RL28_RHIE6</name>
<gene>
    <name evidence="1" type="primary">rpmB</name>
    <name type="ordered locus">RHECIAT_CH0004088</name>
</gene>
<protein>
    <recommendedName>
        <fullName evidence="1">Large ribosomal subunit protein bL28</fullName>
    </recommendedName>
    <alternativeName>
        <fullName evidence="2">50S ribosomal protein L28</fullName>
    </alternativeName>
</protein>
<feature type="chain" id="PRO_1000121676" description="Large ribosomal subunit protein bL28">
    <location>
        <begin position="1"/>
        <end position="99"/>
    </location>
</feature>
<dbReference type="EMBL" id="CP001074">
    <property type="protein sequence ID" value="ACE93018.1"/>
    <property type="molecule type" value="Genomic_DNA"/>
</dbReference>
<dbReference type="SMR" id="B3PPE3"/>
<dbReference type="KEGG" id="rec:RHECIAT_CH0004088"/>
<dbReference type="eggNOG" id="COG0227">
    <property type="taxonomic scope" value="Bacteria"/>
</dbReference>
<dbReference type="HOGENOM" id="CLU_064548_4_2_5"/>
<dbReference type="Proteomes" id="UP000008817">
    <property type="component" value="Chromosome"/>
</dbReference>
<dbReference type="GO" id="GO:0022625">
    <property type="term" value="C:cytosolic large ribosomal subunit"/>
    <property type="evidence" value="ECO:0007669"/>
    <property type="project" value="TreeGrafter"/>
</dbReference>
<dbReference type="GO" id="GO:0003735">
    <property type="term" value="F:structural constituent of ribosome"/>
    <property type="evidence" value="ECO:0007669"/>
    <property type="project" value="InterPro"/>
</dbReference>
<dbReference type="GO" id="GO:0006412">
    <property type="term" value="P:translation"/>
    <property type="evidence" value="ECO:0007669"/>
    <property type="project" value="UniProtKB-UniRule"/>
</dbReference>
<dbReference type="Gene3D" id="2.30.170.40">
    <property type="entry name" value="Ribosomal protein L28/L24"/>
    <property type="match status" value="1"/>
</dbReference>
<dbReference type="HAMAP" id="MF_00373">
    <property type="entry name" value="Ribosomal_bL28"/>
    <property type="match status" value="1"/>
</dbReference>
<dbReference type="InterPro" id="IPR026569">
    <property type="entry name" value="Ribosomal_bL28"/>
</dbReference>
<dbReference type="InterPro" id="IPR034704">
    <property type="entry name" value="Ribosomal_bL28/bL31-like_sf"/>
</dbReference>
<dbReference type="InterPro" id="IPR001383">
    <property type="entry name" value="Ribosomal_bL28_bact-type"/>
</dbReference>
<dbReference type="InterPro" id="IPR037147">
    <property type="entry name" value="Ribosomal_bL28_sf"/>
</dbReference>
<dbReference type="NCBIfam" id="TIGR00009">
    <property type="entry name" value="L28"/>
    <property type="match status" value="1"/>
</dbReference>
<dbReference type="PANTHER" id="PTHR13528">
    <property type="entry name" value="39S RIBOSOMAL PROTEIN L28, MITOCHONDRIAL"/>
    <property type="match status" value="1"/>
</dbReference>
<dbReference type="PANTHER" id="PTHR13528:SF2">
    <property type="entry name" value="LARGE RIBOSOMAL SUBUNIT PROTEIN BL28M"/>
    <property type="match status" value="1"/>
</dbReference>
<dbReference type="Pfam" id="PF00830">
    <property type="entry name" value="Ribosomal_L28"/>
    <property type="match status" value="1"/>
</dbReference>
<dbReference type="SUPFAM" id="SSF143800">
    <property type="entry name" value="L28p-like"/>
    <property type="match status" value="1"/>
</dbReference>
<sequence length="99" mass="10960">MSRVCELTGKAVLTGNNVSHANNKTKRRFLPNLCQVTLISDALNQRYRLRVSAAALRSVEHRGGLDAFLLKASENELSMRARLLRRQIVKKTAEAAVAA</sequence>
<organism>
    <name type="scientific">Rhizobium etli (strain CIAT 652)</name>
    <dbReference type="NCBI Taxonomy" id="491916"/>
    <lineage>
        <taxon>Bacteria</taxon>
        <taxon>Pseudomonadati</taxon>
        <taxon>Pseudomonadota</taxon>
        <taxon>Alphaproteobacteria</taxon>
        <taxon>Hyphomicrobiales</taxon>
        <taxon>Rhizobiaceae</taxon>
        <taxon>Rhizobium/Agrobacterium group</taxon>
        <taxon>Rhizobium</taxon>
    </lineage>
</organism>
<accession>B3PPE3</accession>
<keyword id="KW-0687">Ribonucleoprotein</keyword>
<keyword id="KW-0689">Ribosomal protein</keyword>